<sequence>MYTKIIGTGSYLPEQVRTNADLEKMVDTSDEWIVTRTGIRERHIAAPNETVSTMGFEAATRAIEMAGIEKDQIGLIVVATTSATHAFPSAACQIQSMLGIKGCPAFDVAAACAGFTYALSVADQYVKSGAVKYALVVGSDVLARTCDPTDRGTIIIFGDGAGAAVLAASEEPGIISTHLHADGSYGELLTLPNADRVNPENSIHLTMAGNEVFKVAVTELAHIVDETLAANNLDRSQLDWLVPHQANLRIISATAKKLGMSMDNVVVTLDRHGNTSAASVPCALDEAVRDGRIKPGQLVLLEAFGGGFTWGSALVRF</sequence>
<feature type="chain" id="PRO_1000070228" description="Beta-ketoacyl-[acyl-carrier-protein] synthase III">
    <location>
        <begin position="1"/>
        <end position="317"/>
    </location>
</feature>
<feature type="region of interest" description="ACP-binding" evidence="1">
    <location>
        <begin position="245"/>
        <end position="249"/>
    </location>
</feature>
<feature type="active site" evidence="1">
    <location>
        <position position="112"/>
    </location>
</feature>
<feature type="active site" evidence="1">
    <location>
        <position position="244"/>
    </location>
</feature>
<feature type="active site" evidence="1">
    <location>
        <position position="274"/>
    </location>
</feature>
<organism>
    <name type="scientific">Escherichia coli O139:H28 (strain E24377A / ETEC)</name>
    <dbReference type="NCBI Taxonomy" id="331111"/>
    <lineage>
        <taxon>Bacteria</taxon>
        <taxon>Pseudomonadati</taxon>
        <taxon>Pseudomonadota</taxon>
        <taxon>Gammaproteobacteria</taxon>
        <taxon>Enterobacterales</taxon>
        <taxon>Enterobacteriaceae</taxon>
        <taxon>Escherichia</taxon>
    </lineage>
</organism>
<proteinExistence type="inferred from homology"/>
<dbReference type="EC" id="2.3.1.180" evidence="1"/>
<dbReference type="EMBL" id="CP000800">
    <property type="protein sequence ID" value="ABV19409.1"/>
    <property type="molecule type" value="Genomic_DNA"/>
</dbReference>
<dbReference type="RefSeq" id="WP_000288132.1">
    <property type="nucleotide sequence ID" value="NC_009801.1"/>
</dbReference>
<dbReference type="SMR" id="A7ZKJ4"/>
<dbReference type="GeneID" id="93776317"/>
<dbReference type="KEGG" id="ecw:EcE24377A_1212"/>
<dbReference type="HOGENOM" id="CLU_039592_4_1_6"/>
<dbReference type="UniPathway" id="UPA00094"/>
<dbReference type="Proteomes" id="UP000001122">
    <property type="component" value="Chromosome"/>
</dbReference>
<dbReference type="GO" id="GO:0005737">
    <property type="term" value="C:cytoplasm"/>
    <property type="evidence" value="ECO:0007669"/>
    <property type="project" value="UniProtKB-SubCell"/>
</dbReference>
<dbReference type="GO" id="GO:0004315">
    <property type="term" value="F:3-oxoacyl-[acyl-carrier-protein] synthase activity"/>
    <property type="evidence" value="ECO:0007669"/>
    <property type="project" value="InterPro"/>
</dbReference>
<dbReference type="GO" id="GO:0033818">
    <property type="term" value="F:beta-ketoacyl-acyl-carrier-protein synthase III activity"/>
    <property type="evidence" value="ECO:0007669"/>
    <property type="project" value="UniProtKB-UniRule"/>
</dbReference>
<dbReference type="GO" id="GO:0006633">
    <property type="term" value="P:fatty acid biosynthetic process"/>
    <property type="evidence" value="ECO:0007669"/>
    <property type="project" value="UniProtKB-UniRule"/>
</dbReference>
<dbReference type="CDD" id="cd00830">
    <property type="entry name" value="KAS_III"/>
    <property type="match status" value="1"/>
</dbReference>
<dbReference type="FunFam" id="3.40.47.10:FF:000004">
    <property type="entry name" value="3-oxoacyl-[acyl-carrier-protein] synthase 3"/>
    <property type="match status" value="1"/>
</dbReference>
<dbReference type="Gene3D" id="3.40.47.10">
    <property type="match status" value="1"/>
</dbReference>
<dbReference type="HAMAP" id="MF_01815">
    <property type="entry name" value="FabH"/>
    <property type="match status" value="1"/>
</dbReference>
<dbReference type="InterPro" id="IPR013747">
    <property type="entry name" value="ACP_syn_III_C"/>
</dbReference>
<dbReference type="InterPro" id="IPR013751">
    <property type="entry name" value="ACP_syn_III_N"/>
</dbReference>
<dbReference type="InterPro" id="IPR004655">
    <property type="entry name" value="FabH"/>
</dbReference>
<dbReference type="InterPro" id="IPR016039">
    <property type="entry name" value="Thiolase-like"/>
</dbReference>
<dbReference type="NCBIfam" id="TIGR00747">
    <property type="entry name" value="fabH"/>
    <property type="match status" value="1"/>
</dbReference>
<dbReference type="NCBIfam" id="NF006829">
    <property type="entry name" value="PRK09352.1"/>
    <property type="match status" value="1"/>
</dbReference>
<dbReference type="PANTHER" id="PTHR43091">
    <property type="entry name" value="3-OXOACYL-[ACYL-CARRIER-PROTEIN] SYNTHASE"/>
    <property type="match status" value="1"/>
</dbReference>
<dbReference type="PANTHER" id="PTHR43091:SF1">
    <property type="entry name" value="BETA-KETOACYL-[ACYL-CARRIER-PROTEIN] SYNTHASE III, CHLOROPLASTIC"/>
    <property type="match status" value="1"/>
</dbReference>
<dbReference type="Pfam" id="PF08545">
    <property type="entry name" value="ACP_syn_III"/>
    <property type="match status" value="1"/>
</dbReference>
<dbReference type="Pfam" id="PF08541">
    <property type="entry name" value="ACP_syn_III_C"/>
    <property type="match status" value="1"/>
</dbReference>
<dbReference type="SUPFAM" id="SSF53901">
    <property type="entry name" value="Thiolase-like"/>
    <property type="match status" value="1"/>
</dbReference>
<protein>
    <recommendedName>
        <fullName evidence="1">Beta-ketoacyl-[acyl-carrier-protein] synthase III</fullName>
        <shortName evidence="1">Beta-ketoacyl-ACP synthase III</shortName>
        <shortName evidence="1">KAS III</shortName>
        <ecNumber evidence="1">2.3.1.180</ecNumber>
    </recommendedName>
    <alternativeName>
        <fullName evidence="1">3-oxoacyl-[acyl-carrier-protein] synthase 3</fullName>
    </alternativeName>
    <alternativeName>
        <fullName evidence="1">3-oxoacyl-[acyl-carrier-protein] synthase III</fullName>
    </alternativeName>
</protein>
<name>FABH_ECO24</name>
<evidence type="ECO:0000255" key="1">
    <source>
        <dbReference type="HAMAP-Rule" id="MF_01815"/>
    </source>
</evidence>
<keyword id="KW-0012">Acyltransferase</keyword>
<keyword id="KW-0963">Cytoplasm</keyword>
<keyword id="KW-0275">Fatty acid biosynthesis</keyword>
<keyword id="KW-0276">Fatty acid metabolism</keyword>
<keyword id="KW-0444">Lipid biosynthesis</keyword>
<keyword id="KW-0443">Lipid metabolism</keyword>
<keyword id="KW-0511">Multifunctional enzyme</keyword>
<keyword id="KW-1185">Reference proteome</keyword>
<keyword id="KW-0808">Transferase</keyword>
<comment type="function">
    <text evidence="1">Catalyzes the condensation reaction of fatty acid synthesis by the addition to an acyl acceptor of two carbons from malonyl-ACP. Catalyzes the first condensation reaction which initiates fatty acid synthesis and may therefore play a role in governing the total rate of fatty acid production. Possesses both acetoacetyl-ACP synthase and acetyl transacylase activities. Its substrate specificity determines the biosynthesis of branched-chain and/or straight-chain of fatty acids.</text>
</comment>
<comment type="catalytic activity">
    <reaction evidence="1">
        <text>malonyl-[ACP] + acetyl-CoA + H(+) = 3-oxobutanoyl-[ACP] + CO2 + CoA</text>
        <dbReference type="Rhea" id="RHEA:12080"/>
        <dbReference type="Rhea" id="RHEA-COMP:9623"/>
        <dbReference type="Rhea" id="RHEA-COMP:9625"/>
        <dbReference type="ChEBI" id="CHEBI:15378"/>
        <dbReference type="ChEBI" id="CHEBI:16526"/>
        <dbReference type="ChEBI" id="CHEBI:57287"/>
        <dbReference type="ChEBI" id="CHEBI:57288"/>
        <dbReference type="ChEBI" id="CHEBI:78449"/>
        <dbReference type="ChEBI" id="CHEBI:78450"/>
        <dbReference type="EC" id="2.3.1.180"/>
    </reaction>
</comment>
<comment type="pathway">
    <text evidence="1">Lipid metabolism; fatty acid biosynthesis.</text>
</comment>
<comment type="subunit">
    <text evidence="1">Homodimer.</text>
</comment>
<comment type="subcellular location">
    <subcellularLocation>
        <location evidence="1">Cytoplasm</location>
    </subcellularLocation>
</comment>
<comment type="domain">
    <text evidence="1">The last Arg residue of the ACP-binding site is essential for the weak association between ACP/AcpP and FabH.</text>
</comment>
<comment type="similarity">
    <text evidence="1">Belongs to the thiolase-like superfamily. FabH family.</text>
</comment>
<accession>A7ZKJ4</accession>
<gene>
    <name evidence="1" type="primary">fabH</name>
    <name type="ordered locus">EcE24377A_1212</name>
</gene>
<reference key="1">
    <citation type="journal article" date="2008" name="J. Bacteriol.">
        <title>The pangenome structure of Escherichia coli: comparative genomic analysis of E. coli commensal and pathogenic isolates.</title>
        <authorList>
            <person name="Rasko D.A."/>
            <person name="Rosovitz M.J."/>
            <person name="Myers G.S.A."/>
            <person name="Mongodin E.F."/>
            <person name="Fricke W.F."/>
            <person name="Gajer P."/>
            <person name="Crabtree J."/>
            <person name="Sebaihia M."/>
            <person name="Thomson N.R."/>
            <person name="Chaudhuri R."/>
            <person name="Henderson I.R."/>
            <person name="Sperandio V."/>
            <person name="Ravel J."/>
        </authorList>
    </citation>
    <scope>NUCLEOTIDE SEQUENCE [LARGE SCALE GENOMIC DNA]</scope>
    <source>
        <strain>E24377A / ETEC</strain>
    </source>
</reference>